<evidence type="ECO:0000250" key="1">
    <source>
        <dbReference type="UniProtKB" id="Q60605"/>
    </source>
</evidence>
<evidence type="ECO:0000255" key="2">
    <source>
        <dbReference type="PROSITE-ProRule" id="PRU00448"/>
    </source>
</evidence>
<evidence type="ECO:0000303" key="3">
    <source>
    </source>
</evidence>
<evidence type="ECO:0000303" key="4">
    <source>
    </source>
</evidence>
<evidence type="ECO:0000305" key="5"/>
<evidence type="ECO:0007744" key="6">
    <source>
    </source>
</evidence>
<evidence type="ECO:0007744" key="7">
    <source>
    </source>
</evidence>
<evidence type="ECO:0007744" key="8">
    <source>
    </source>
</evidence>
<evidence type="ECO:0007744" key="9">
    <source>
    </source>
</evidence>
<evidence type="ECO:0007744" key="10">
    <source>
    </source>
</evidence>
<evidence type="ECO:0007744" key="11">
    <source>
    </source>
</evidence>
<evidence type="ECO:0007744" key="12">
    <source>
    </source>
</evidence>
<evidence type="ECO:0007744" key="13">
    <source>
    </source>
</evidence>
<proteinExistence type="evidence at protein level"/>
<name>MYL6_HUMAN</name>
<dbReference type="EMBL" id="M22918">
    <property type="protein sequence ID" value="AAA36347.1"/>
    <property type="molecule type" value="mRNA"/>
</dbReference>
<dbReference type="EMBL" id="M22919">
    <property type="protein sequence ID" value="AAA59892.1"/>
    <property type="molecule type" value="Genomic_DNA"/>
</dbReference>
<dbReference type="EMBL" id="M22919">
    <property type="protein sequence ID" value="AAA59893.1"/>
    <property type="molecule type" value="Genomic_DNA"/>
</dbReference>
<dbReference type="EMBL" id="M22920">
    <property type="protein sequence ID" value="AAA36348.1"/>
    <property type="molecule type" value="mRNA"/>
</dbReference>
<dbReference type="EMBL" id="M31212">
    <property type="protein sequence ID" value="AAA59853.1"/>
    <property type="molecule type" value="mRNA"/>
</dbReference>
<dbReference type="EMBL" id="U02629">
    <property type="protein sequence ID" value="AAA20643.1"/>
    <property type="molecule type" value="mRNA"/>
</dbReference>
<dbReference type="EMBL" id="AB046613">
    <property type="protein sequence ID" value="BAB62402.1"/>
    <property type="molecule type" value="mRNA"/>
</dbReference>
<dbReference type="EMBL" id="CR457014">
    <property type="protein sequence ID" value="CAG33295.1"/>
    <property type="molecule type" value="mRNA"/>
</dbReference>
<dbReference type="EMBL" id="BC006781">
    <property type="protein sequence ID" value="AAH06781.2"/>
    <property type="molecule type" value="mRNA"/>
</dbReference>
<dbReference type="EMBL" id="BC017455">
    <property type="protein sequence ID" value="AAH17455.1"/>
    <property type="molecule type" value="mRNA"/>
</dbReference>
<dbReference type="EMBL" id="BC071661">
    <property type="protein sequence ID" value="AAH71661.1"/>
    <property type="molecule type" value="mRNA"/>
</dbReference>
<dbReference type="EMBL" id="BC093066">
    <property type="protein sequence ID" value="AAH93066.1"/>
    <property type="molecule type" value="mRNA"/>
</dbReference>
<dbReference type="CCDS" id="CCDS31834.1">
    <molecule id="P60660-2"/>
</dbReference>
<dbReference type="CCDS" id="CCDS8906.1"/>
<dbReference type="PIR" id="A33709">
    <property type="entry name" value="MOHU6N"/>
</dbReference>
<dbReference type="PIR" id="A49620">
    <property type="entry name" value="MOHU6E"/>
</dbReference>
<dbReference type="PIR" id="B33709">
    <property type="entry name" value="MOHU6M"/>
</dbReference>
<dbReference type="RefSeq" id="NP_066299.2">
    <molecule id="P60660-1"/>
    <property type="nucleotide sequence ID" value="NM_021019.4"/>
</dbReference>
<dbReference type="RefSeq" id="NP_524147.2">
    <molecule id="P60660-2"/>
    <property type="nucleotide sequence ID" value="NM_079423.4"/>
</dbReference>
<dbReference type="SMR" id="P60660"/>
<dbReference type="BioGRID" id="110721">
    <property type="interactions" value="265"/>
</dbReference>
<dbReference type="CORUM" id="P60660"/>
<dbReference type="FunCoup" id="P60660">
    <property type="interactions" value="1525"/>
</dbReference>
<dbReference type="IntAct" id="P60660">
    <property type="interactions" value="112"/>
</dbReference>
<dbReference type="MINT" id="P60660"/>
<dbReference type="STRING" id="9606.ENSP00000446955"/>
<dbReference type="GlyGen" id="P60660">
    <property type="glycosylation" value="2 sites, 3 N-linked glycans (1 site), 1 O-linked glycan (1 site)"/>
</dbReference>
<dbReference type="iPTMnet" id="P60660"/>
<dbReference type="MetOSite" id="P60660"/>
<dbReference type="PhosphoSitePlus" id="P60660"/>
<dbReference type="SwissPalm" id="P60660"/>
<dbReference type="BioMuta" id="MYL6"/>
<dbReference type="DMDM" id="47606436"/>
<dbReference type="jPOST" id="P60660"/>
<dbReference type="MassIVE" id="P60660"/>
<dbReference type="PaxDb" id="9606-ENSP00000446955"/>
<dbReference type="PeptideAtlas" id="P60660"/>
<dbReference type="PRIDE" id="P60660"/>
<dbReference type="ProteomicsDB" id="57221"/>
<dbReference type="ProteomicsDB" id="57222">
    <molecule id="P60660-2"/>
</dbReference>
<dbReference type="Pumba" id="P60660"/>
<dbReference type="TopDownProteomics" id="P60660-1">
    <molecule id="P60660-1"/>
</dbReference>
<dbReference type="TopDownProteomics" id="P60660-2">
    <molecule id="P60660-2"/>
</dbReference>
<dbReference type="Antibodypedia" id="27997">
    <property type="antibodies" value="341 antibodies from 29 providers"/>
</dbReference>
<dbReference type="DNASU" id="4637"/>
<dbReference type="Ensembl" id="ENST00000547649.5">
    <molecule id="P60660-2"/>
    <property type="protein sequence ID" value="ENSP00000446714.1"/>
    <property type="gene ID" value="ENSG00000092841.19"/>
</dbReference>
<dbReference type="Ensembl" id="ENST00000548293.5">
    <molecule id="P60660-1"/>
    <property type="protein sequence ID" value="ENSP00000448101.1"/>
    <property type="gene ID" value="ENSG00000092841.19"/>
</dbReference>
<dbReference type="Ensembl" id="ENST00000550697.6">
    <molecule id="P60660-1"/>
    <property type="protein sequence ID" value="ENSP00000446955.2"/>
    <property type="gene ID" value="ENSG00000092841.19"/>
</dbReference>
<dbReference type="GeneID" id="4637"/>
<dbReference type="KEGG" id="hsa:4637"/>
<dbReference type="MANE-Select" id="ENST00000550697.6">
    <property type="protein sequence ID" value="ENSP00000446955.2"/>
    <property type="RefSeq nucleotide sequence ID" value="NM_021019.5"/>
    <property type="RefSeq protein sequence ID" value="NP_066299.2"/>
</dbReference>
<dbReference type="UCSC" id="uc001sjw.3">
    <property type="organism name" value="human"/>
</dbReference>
<dbReference type="AGR" id="HGNC:7587"/>
<dbReference type="CTD" id="4637"/>
<dbReference type="DisGeNET" id="4637"/>
<dbReference type="GeneCards" id="MYL6"/>
<dbReference type="HGNC" id="HGNC:7587">
    <property type="gene designation" value="MYL6"/>
</dbReference>
<dbReference type="HPA" id="ENSG00000092841">
    <property type="expression patterns" value="Low tissue specificity"/>
</dbReference>
<dbReference type="MIM" id="609931">
    <property type="type" value="gene"/>
</dbReference>
<dbReference type="neXtProt" id="NX_P60660"/>
<dbReference type="OpenTargets" id="ENSG00000092841"/>
<dbReference type="PharmGKB" id="PA31384"/>
<dbReference type="VEuPathDB" id="HostDB:ENSG00000092841"/>
<dbReference type="eggNOG" id="KOG0030">
    <property type="taxonomic scope" value="Eukaryota"/>
</dbReference>
<dbReference type="GeneTree" id="ENSGT01030000234570"/>
<dbReference type="InParanoid" id="P60660"/>
<dbReference type="OrthoDB" id="5959761at2759"/>
<dbReference type="PAN-GO" id="P60660">
    <property type="GO annotations" value="2 GO annotations based on evolutionary models"/>
</dbReference>
<dbReference type="PhylomeDB" id="P60660"/>
<dbReference type="TreeFam" id="TF351553"/>
<dbReference type="PathwayCommons" id="P60660"/>
<dbReference type="Reactome" id="R-HSA-3928663">
    <property type="pathway name" value="EPHA-mediated growth cone collapse"/>
</dbReference>
<dbReference type="Reactome" id="R-HSA-416572">
    <property type="pathway name" value="Sema4D induced cell migration and growth-cone collapse"/>
</dbReference>
<dbReference type="Reactome" id="R-HSA-445355">
    <property type="pathway name" value="Smooth Muscle Contraction"/>
</dbReference>
<dbReference type="Reactome" id="R-HSA-5625740">
    <property type="pathway name" value="RHO GTPases activate PKNs"/>
</dbReference>
<dbReference type="Reactome" id="R-HSA-5625900">
    <property type="pathway name" value="RHO GTPases activate CIT"/>
</dbReference>
<dbReference type="Reactome" id="R-HSA-5627117">
    <property type="pathway name" value="RHO GTPases Activate ROCKs"/>
</dbReference>
<dbReference type="Reactome" id="R-HSA-5627123">
    <property type="pathway name" value="RHO GTPases activate PAKs"/>
</dbReference>
<dbReference type="SignaLink" id="P60660"/>
<dbReference type="BioGRID-ORCS" id="4637">
    <property type="hits" value="29 hits in 1152 CRISPR screens"/>
</dbReference>
<dbReference type="CD-CODE" id="FB4E32DD">
    <property type="entry name" value="Presynaptic clusters and postsynaptic densities"/>
</dbReference>
<dbReference type="ChiTaRS" id="MYL6">
    <property type="organism name" value="human"/>
</dbReference>
<dbReference type="GeneWiki" id="MYL6"/>
<dbReference type="GenomeRNAi" id="4637"/>
<dbReference type="Pharos" id="P60660">
    <property type="development level" value="Tbio"/>
</dbReference>
<dbReference type="PRO" id="PR:P60660"/>
<dbReference type="Proteomes" id="UP000005640">
    <property type="component" value="Chromosome 12"/>
</dbReference>
<dbReference type="RNAct" id="P60660">
    <property type="molecule type" value="protein"/>
</dbReference>
<dbReference type="Bgee" id="ENSG00000092841">
    <property type="expression patterns" value="Expressed in muscle layer of sigmoid colon and 206 other cell types or tissues"/>
</dbReference>
<dbReference type="ExpressionAtlas" id="P60660">
    <property type="expression patterns" value="baseline and differential"/>
</dbReference>
<dbReference type="GO" id="GO:0005903">
    <property type="term" value="C:brush border"/>
    <property type="evidence" value="ECO:0000314"/>
    <property type="project" value="UniProtKB"/>
</dbReference>
<dbReference type="GO" id="GO:0005829">
    <property type="term" value="C:cytosol"/>
    <property type="evidence" value="ECO:0000304"/>
    <property type="project" value="Reactome"/>
</dbReference>
<dbReference type="GO" id="GO:0070062">
    <property type="term" value="C:extracellular exosome"/>
    <property type="evidence" value="ECO:0007005"/>
    <property type="project" value="UniProtKB"/>
</dbReference>
<dbReference type="GO" id="GO:0016020">
    <property type="term" value="C:membrane"/>
    <property type="evidence" value="ECO:0007005"/>
    <property type="project" value="UniProtKB"/>
</dbReference>
<dbReference type="GO" id="GO:0016459">
    <property type="term" value="C:myosin complex"/>
    <property type="evidence" value="ECO:0000304"/>
    <property type="project" value="HGNC-UCL"/>
</dbReference>
<dbReference type="GO" id="GO:0016460">
    <property type="term" value="C:myosin II complex"/>
    <property type="evidence" value="ECO:0000318"/>
    <property type="project" value="GO_Central"/>
</dbReference>
<dbReference type="GO" id="GO:0016461">
    <property type="term" value="C:unconventional myosin complex"/>
    <property type="evidence" value="ECO:0000304"/>
    <property type="project" value="BHF-UCL"/>
</dbReference>
<dbReference type="GO" id="GO:0031982">
    <property type="term" value="C:vesicle"/>
    <property type="evidence" value="ECO:0007005"/>
    <property type="project" value="UniProtKB"/>
</dbReference>
<dbReference type="GO" id="GO:0005509">
    <property type="term" value="F:calcium ion binding"/>
    <property type="evidence" value="ECO:0007669"/>
    <property type="project" value="InterPro"/>
</dbReference>
<dbReference type="GO" id="GO:0003774">
    <property type="term" value="F:cytoskeletal motor activity"/>
    <property type="evidence" value="ECO:0000304"/>
    <property type="project" value="HGNC-UCL"/>
</dbReference>
<dbReference type="GO" id="GO:0000146">
    <property type="term" value="F:microfilament motor activity"/>
    <property type="evidence" value="ECO:0000250"/>
    <property type="project" value="HGNC-UCL"/>
</dbReference>
<dbReference type="GO" id="GO:0008307">
    <property type="term" value="F:structural constituent of muscle"/>
    <property type="evidence" value="ECO:0000314"/>
    <property type="project" value="HGNC-UCL"/>
</dbReference>
<dbReference type="GO" id="GO:0006936">
    <property type="term" value="P:muscle contraction"/>
    <property type="evidence" value="ECO:0000304"/>
    <property type="project" value="HGNC-UCL"/>
</dbReference>
<dbReference type="GO" id="GO:0030049">
    <property type="term" value="P:muscle filament sliding"/>
    <property type="evidence" value="ECO:0000304"/>
    <property type="project" value="HGNC-UCL"/>
</dbReference>
<dbReference type="GO" id="GO:0007519">
    <property type="term" value="P:skeletal muscle tissue development"/>
    <property type="evidence" value="ECO:0000304"/>
    <property type="project" value="UniProtKB"/>
</dbReference>
<dbReference type="CDD" id="cd00051">
    <property type="entry name" value="EFh"/>
    <property type="match status" value="1"/>
</dbReference>
<dbReference type="FunFam" id="1.10.238.10:FF:000019">
    <property type="entry name" value="Myosin light chain 1 skeletal"/>
    <property type="match status" value="1"/>
</dbReference>
<dbReference type="FunFam" id="1.10.238.10:FF:000056">
    <property type="entry name" value="Myosin light chain 1 skeletal"/>
    <property type="match status" value="1"/>
</dbReference>
<dbReference type="Gene3D" id="1.10.238.10">
    <property type="entry name" value="EF-hand"/>
    <property type="match status" value="2"/>
</dbReference>
<dbReference type="InterPro" id="IPR050230">
    <property type="entry name" value="CALM/Myosin/TropC-like"/>
</dbReference>
<dbReference type="InterPro" id="IPR011992">
    <property type="entry name" value="EF-hand-dom_pair"/>
</dbReference>
<dbReference type="InterPro" id="IPR002048">
    <property type="entry name" value="EF_hand_dom"/>
</dbReference>
<dbReference type="PANTHER" id="PTHR23048">
    <property type="entry name" value="MYOSIN LIGHT CHAIN 1, 3"/>
    <property type="match status" value="1"/>
</dbReference>
<dbReference type="PANTHER" id="PTHR23048:SF43">
    <property type="entry name" value="MYOSIN LIGHT POLYPEPTIDE 6"/>
    <property type="match status" value="1"/>
</dbReference>
<dbReference type="SMART" id="SM00054">
    <property type="entry name" value="EFh"/>
    <property type="match status" value="2"/>
</dbReference>
<dbReference type="SUPFAM" id="SSF47473">
    <property type="entry name" value="EF-hand"/>
    <property type="match status" value="1"/>
</dbReference>
<dbReference type="PROSITE" id="PS50222">
    <property type="entry name" value="EF_HAND_2"/>
    <property type="match status" value="2"/>
</dbReference>
<gene>
    <name type="primary">MYL6</name>
</gene>
<comment type="function">
    <text>Regulatory light chain of myosin. Does not bind calcium.</text>
</comment>
<comment type="subunit">
    <text evidence="1">Myosin is a hexamer of 2 heavy chains and 4 light chains. Interacts with SPATA6.</text>
</comment>
<comment type="interaction">
    <interactant intactId="EBI-300817">
        <id>P60660</id>
    </interactant>
    <interactant intactId="EBI-9028051">
        <id>P58397</id>
        <label>ADAMTS12</label>
    </interactant>
    <organismsDiffer>false</organismsDiffer>
    <experiments>4</experiments>
</comment>
<comment type="interaction">
    <interactant intactId="EBI-300817">
        <id>P60660</id>
    </interactant>
    <interactant intactId="EBI-712648">
        <id>O95994</id>
        <label>AGR2</label>
    </interactant>
    <organismsDiffer>false</organismsDiffer>
    <experiments>3</experiments>
</comment>
<comment type="interaction">
    <interactant intactId="EBI-300817">
        <id>P60660</id>
    </interactant>
    <interactant intactId="EBI-742054">
        <id>Q96D03</id>
        <label>DDIT4L</label>
    </interactant>
    <organismsDiffer>false</organismsDiffer>
    <experiments>3</experiments>
</comment>
<comment type="interaction">
    <interactant intactId="EBI-300817">
        <id>P60660</id>
    </interactant>
    <interactant intactId="EBI-78473">
        <id>P03372</id>
        <label>ESR1</label>
    </interactant>
    <organismsDiffer>false</organismsDiffer>
    <experiments>3</experiments>
</comment>
<comment type="interaction">
    <interactant intactId="EBI-300817">
        <id>P60660</id>
    </interactant>
    <interactant intactId="EBI-9248152">
        <id>Q86XJ1</id>
        <label>GAS2L3</label>
    </interactant>
    <organismsDiffer>false</organismsDiffer>
    <experiments>3</experiments>
</comment>
<comment type="interaction">
    <interactant intactId="EBI-300817">
        <id>P60660</id>
    </interactant>
    <interactant intactId="EBI-355720">
        <id>O43809</id>
        <label>NUDT21</label>
    </interactant>
    <organismsDiffer>false</organismsDiffer>
    <experiments>5</experiments>
</comment>
<comment type="alternative products">
    <event type="alternative splicing"/>
    <isoform>
        <id>P60660-1</id>
        <id>P16475-1</id>
        <name>Non-muscle</name>
        <name>MLC3nm</name>
        <name>LC17A</name>
        <name>LC17-nm</name>
        <sequence type="displayed"/>
    </isoform>
    <isoform>
        <id>P60660-2</id>
        <id>P24572-2</id>
        <name>Smooth muscle</name>
        <name>MLC3sm</name>
        <name>LC17B</name>
        <name>LC17-sm</name>
        <sequence type="described" ref="VSP_009735"/>
    </isoform>
</comment>
<organism>
    <name type="scientific">Homo sapiens</name>
    <name type="common">Human</name>
    <dbReference type="NCBI Taxonomy" id="9606"/>
    <lineage>
        <taxon>Eukaryota</taxon>
        <taxon>Metazoa</taxon>
        <taxon>Chordata</taxon>
        <taxon>Craniata</taxon>
        <taxon>Vertebrata</taxon>
        <taxon>Euteleostomi</taxon>
        <taxon>Mammalia</taxon>
        <taxon>Eutheria</taxon>
        <taxon>Euarchontoglires</taxon>
        <taxon>Primates</taxon>
        <taxon>Haplorrhini</taxon>
        <taxon>Catarrhini</taxon>
        <taxon>Hominidae</taxon>
        <taxon>Homo</taxon>
    </lineage>
</organism>
<keyword id="KW-0007">Acetylation</keyword>
<keyword id="KW-0025">Alternative splicing</keyword>
<keyword id="KW-0903">Direct protein sequencing</keyword>
<keyword id="KW-0505">Motor protein</keyword>
<keyword id="KW-0514">Muscle protein</keyword>
<keyword id="KW-0518">Myosin</keyword>
<keyword id="KW-0597">Phosphoprotein</keyword>
<keyword id="KW-1267">Proteomics identification</keyword>
<keyword id="KW-1185">Reference proteome</keyword>
<keyword id="KW-0677">Repeat</keyword>
<accession>P60660</accession>
<accession>P16475</accession>
<accession>P24572</accession>
<accession>P24573</accession>
<accession>Q12790</accession>
<accession>Q561V9</accession>
<accession>Q6IAZ0</accession>
<accession>Q6IPY5</accession>
<reference key="1">
    <citation type="journal article" date="1989" name="J. Biol. Chem.">
        <title>The alkali light chains of human smooth and nonmuscle myosins are encoded by a single gene. Tissue-specific expression by alternative splicing pathways.</title>
        <authorList>
            <person name="Lenz S."/>
            <person name="Lohse P."/>
            <person name="Seidel U."/>
            <person name="Arnold H.H."/>
        </authorList>
    </citation>
    <scope>NUCLEOTIDE SEQUENCE [GENOMIC DNA / MRNA] (ISOFORMS NON-MUSCLE AND SMOOTH MUSCLE)</scope>
</reference>
<reference key="2">
    <citation type="journal article" date="1990" name="Mol. Cell. Biol.">
        <title>Characterization of human myosin light chains 1sa and 3nm: implications for isoform evolution and function.</title>
        <authorList>
            <person name="Hailstones D.L."/>
            <person name="Gunning P.W."/>
        </authorList>
    </citation>
    <scope>NUCLEOTIDE SEQUENCE [MRNA] (ISOFORM NON-MUSCLE)</scope>
</reference>
<reference key="3">
    <citation type="journal article" date="1994" name="Genomics">
        <title>Molecular cloning, sequencing, and characterization of smooth muscle myosin alkali light chain from human eye cDNA: homology with myocardial fatty acid ethyl ester synthase-III cDNA.</title>
        <authorList>
            <person name="Bora P.S."/>
            <person name="Bora N.S."/>
            <person name="Wu X."/>
            <person name="Kaplan H.J."/>
            <person name="Lange L.G."/>
        </authorList>
    </citation>
    <scope>NUCLEOTIDE SEQUENCE [MRNA] (ISOFORM NON-MUSCLE)</scope>
    <source>
        <tissue>Eye</tissue>
    </source>
</reference>
<reference key="4">
    <citation type="journal article" date="2001" name="J. Smooth Muscle Res.">
        <title>Molecular cloning and sequencing of myosin light chains in human megakaryoblastic leukemia cells.</title>
        <authorList>
            <person name="Watanabe M."/>
            <person name="Kohri M."/>
            <person name="Takaishi M."/>
            <person name="Horie R."/>
            <person name="Higashihara M."/>
        </authorList>
    </citation>
    <scope>NUCLEOTIDE SEQUENCE [MRNA] (ISOFORM NON-MUSCLE)</scope>
</reference>
<reference key="5">
    <citation type="submission" date="2004-06" db="EMBL/GenBank/DDBJ databases">
        <title>Cloning of human full open reading frames in Gateway(TM) system entry vector (pDONR201).</title>
        <authorList>
            <person name="Ebert L."/>
            <person name="Schick M."/>
            <person name="Neubert P."/>
            <person name="Schatten R."/>
            <person name="Henze S."/>
            <person name="Korn B."/>
        </authorList>
    </citation>
    <scope>NUCLEOTIDE SEQUENCE [LARGE SCALE MRNA] (ISOFORM NON-MUSCLE)</scope>
</reference>
<reference key="6">
    <citation type="journal article" date="2004" name="Genome Res.">
        <title>The status, quality, and expansion of the NIH full-length cDNA project: the Mammalian Gene Collection (MGC).</title>
        <authorList>
            <consortium name="The MGC Project Team"/>
        </authorList>
    </citation>
    <scope>NUCLEOTIDE SEQUENCE [LARGE SCALE MRNA] (ISOFORMS NON-MUSCLE AND SMOOTH MUSCLE)</scope>
    <source>
        <tissue>Brain</tissue>
        <tissue>Duodenum</tissue>
        <tissue>Lung</tissue>
        <tissue>Placenta</tissue>
    </source>
</reference>
<reference key="7">
    <citation type="submission" date="2005-03" db="UniProtKB">
        <authorList>
            <person name="Bienvenut W.V."/>
        </authorList>
    </citation>
    <scope>PROTEIN SEQUENCE OF 14-21; 38-50; 64-94 AND 111-119</scope>
    <scope>IDENTIFICATION BY MASS SPECTROMETRY</scope>
    <source>
        <tissue>B-cell lymphoma</tissue>
    </source>
</reference>
<reference key="8">
    <citation type="journal article" date="2003" name="Nature">
        <title>Proteomic characterization of the human centrosome by protein correlation profiling.</title>
        <authorList>
            <person name="Andersen J.S."/>
            <person name="Wilkinson C.J."/>
            <person name="Mayor T."/>
            <person name="Mortensen P."/>
            <person name="Nigg E.A."/>
            <person name="Mann M."/>
        </authorList>
    </citation>
    <scope>IDENTIFICATION BY MASS SPECTROMETRY</scope>
    <source>
        <tissue>Lymphoblast</tissue>
    </source>
</reference>
<reference key="9">
    <citation type="journal article" date="2008" name="Proc. Natl. Acad. Sci. U.S.A.">
        <title>A quantitative atlas of mitotic phosphorylation.</title>
        <authorList>
            <person name="Dephoure N."/>
            <person name="Zhou C."/>
            <person name="Villen J."/>
            <person name="Beausoleil S.A."/>
            <person name="Bakalarski C.E."/>
            <person name="Elledge S.J."/>
            <person name="Gygi S.P."/>
        </authorList>
    </citation>
    <scope>PHOSPHORYLATION [LARGE SCALE ANALYSIS] AT SER-135 (ISOFORM SMOOTH MUSCLE)</scope>
    <scope>IDENTIFICATION BY MASS SPECTROMETRY [LARGE SCALE ANALYSIS]</scope>
    <source>
        <tissue>Cervix carcinoma</tissue>
    </source>
</reference>
<reference key="10">
    <citation type="journal article" date="2009" name="Anal. Chem.">
        <title>Lys-N and trypsin cover complementary parts of the phosphoproteome in a refined SCX-based approach.</title>
        <authorList>
            <person name="Gauci S."/>
            <person name="Helbig A.O."/>
            <person name="Slijper M."/>
            <person name="Krijgsveld J."/>
            <person name="Heck A.J."/>
            <person name="Mohammed S."/>
        </authorList>
    </citation>
    <scope>ACETYLATION [LARGE SCALE ANALYSIS] AT CYS-2</scope>
    <scope>CLEAVAGE OF INITIATOR METHIONINE [LARGE SCALE ANALYSIS]</scope>
    <scope>IDENTIFICATION BY MASS SPECTROMETRY [LARGE SCALE ANALYSIS]</scope>
</reference>
<reference key="11">
    <citation type="journal article" date="2009" name="Science">
        <title>Lysine acetylation targets protein complexes and co-regulates major cellular functions.</title>
        <authorList>
            <person name="Choudhary C."/>
            <person name="Kumar C."/>
            <person name="Gnad F."/>
            <person name="Nielsen M.L."/>
            <person name="Rehman M."/>
            <person name="Walther T.C."/>
            <person name="Olsen J.V."/>
            <person name="Mann M."/>
        </authorList>
    </citation>
    <scope>ACETYLATION [LARGE SCALE ANALYSIS] AT LYS-81</scope>
    <scope>IDENTIFICATION BY MASS SPECTROMETRY [LARGE SCALE ANALYSIS]</scope>
</reference>
<reference key="12">
    <citation type="journal article" date="2011" name="BMC Syst. Biol.">
        <title>Initial characterization of the human central proteome.</title>
        <authorList>
            <person name="Burkard T.R."/>
            <person name="Planyavsky M."/>
            <person name="Kaupe I."/>
            <person name="Breitwieser F.P."/>
            <person name="Buerckstuemmer T."/>
            <person name="Bennett K.L."/>
            <person name="Superti-Furga G."/>
            <person name="Colinge J."/>
        </authorList>
    </citation>
    <scope>IDENTIFICATION BY MASS SPECTROMETRY [LARGE SCALE ANALYSIS]</scope>
</reference>
<reference key="13">
    <citation type="journal article" date="2012" name="Mol. Cell. Proteomics">
        <title>Comparative large-scale characterisation of plant vs. mammal proteins reveals similar and idiosyncratic N-alpha acetylation features.</title>
        <authorList>
            <person name="Bienvenut W.V."/>
            <person name="Sumpton D."/>
            <person name="Martinez A."/>
            <person name="Lilla S."/>
            <person name="Espagne C."/>
            <person name="Meinnel T."/>
            <person name="Giglione C."/>
        </authorList>
    </citation>
    <scope>ACETYLATION [LARGE SCALE ANALYSIS] AT CYS-2</scope>
    <scope>CLEAVAGE OF INITIATOR METHIONINE [LARGE SCALE ANALYSIS]</scope>
    <scope>IDENTIFICATION BY MASS SPECTROMETRY [LARGE SCALE ANALYSIS]</scope>
</reference>
<reference key="14">
    <citation type="journal article" date="2012" name="Proc. Natl. Acad. Sci. U.S.A.">
        <title>N-terminal acetylome analyses and functional insights of the N-terminal acetyltransferase NatB.</title>
        <authorList>
            <person name="Van Damme P."/>
            <person name="Lasa M."/>
            <person name="Polevoda B."/>
            <person name="Gazquez C."/>
            <person name="Elosegui-Artola A."/>
            <person name="Kim D.S."/>
            <person name="De Juan-Pardo E."/>
            <person name="Demeyer K."/>
            <person name="Hole K."/>
            <person name="Larrea E."/>
            <person name="Timmerman E."/>
            <person name="Prieto J."/>
            <person name="Arnesen T."/>
            <person name="Sherman F."/>
            <person name="Gevaert K."/>
            <person name="Aldabe R."/>
        </authorList>
    </citation>
    <scope>ACETYLATION [LARGE SCALE ANALYSIS] AT CYS-2</scope>
    <scope>CLEAVAGE OF INITIATOR METHIONINE [LARGE SCALE ANALYSIS]</scope>
    <scope>IDENTIFICATION BY MASS SPECTROMETRY [LARGE SCALE ANALYSIS]</scope>
</reference>
<reference key="15">
    <citation type="journal article" date="2013" name="J. Proteome Res.">
        <title>Toward a comprehensive characterization of a human cancer cell phosphoproteome.</title>
        <authorList>
            <person name="Zhou H."/>
            <person name="Di Palma S."/>
            <person name="Preisinger C."/>
            <person name="Peng M."/>
            <person name="Polat A.N."/>
            <person name="Heck A.J."/>
            <person name="Mohammed S."/>
        </authorList>
    </citation>
    <scope>PHOSPHORYLATION [LARGE SCALE ANALYSIS] AT SER-57</scope>
    <scope>IDENTIFICATION BY MASS SPECTROMETRY [LARGE SCALE ANALYSIS]</scope>
    <source>
        <tissue>Cervix carcinoma</tissue>
        <tissue>Erythroleukemia</tissue>
    </source>
</reference>
<reference key="16">
    <citation type="journal article" date="2014" name="J. Proteomics">
        <title>An enzyme assisted RP-RPLC approach for in-depth analysis of human liver phosphoproteome.</title>
        <authorList>
            <person name="Bian Y."/>
            <person name="Song C."/>
            <person name="Cheng K."/>
            <person name="Dong M."/>
            <person name="Wang F."/>
            <person name="Huang J."/>
            <person name="Sun D."/>
            <person name="Wang L."/>
            <person name="Ye M."/>
            <person name="Zou H."/>
        </authorList>
    </citation>
    <scope>PHOSPHORYLATION [LARGE SCALE ANALYSIS] AT SER-57</scope>
    <scope>IDENTIFICATION BY MASS SPECTROMETRY [LARGE SCALE ANALYSIS]</scope>
    <source>
        <tissue>Liver</tissue>
    </source>
</reference>
<reference key="17">
    <citation type="journal article" date="2015" name="Proteomics">
        <title>N-terminome analysis of the human mitochondrial proteome.</title>
        <authorList>
            <person name="Vaca Jacome A.S."/>
            <person name="Rabilloud T."/>
            <person name="Schaeffer-Reiss C."/>
            <person name="Rompais M."/>
            <person name="Ayoub D."/>
            <person name="Lane L."/>
            <person name="Bairoch A."/>
            <person name="Van Dorsselaer A."/>
            <person name="Carapito C."/>
        </authorList>
    </citation>
    <scope>ACETYLATION [LARGE SCALE ANALYSIS] AT CYS-2</scope>
    <scope>CLEAVAGE OF INITIATOR METHIONINE [LARGE SCALE ANALYSIS]</scope>
    <scope>IDENTIFICATION BY MASS SPECTROMETRY [LARGE SCALE ANALYSIS]</scope>
</reference>
<feature type="initiator methionine" description="Removed" evidence="7 9 10 13">
    <location>
        <position position="1"/>
    </location>
</feature>
<feature type="chain" id="PRO_0000198690" description="Myosin light polypeptide 6">
    <location>
        <begin position="2"/>
        <end position="151"/>
    </location>
</feature>
<feature type="domain" description="EF-hand 1" evidence="2">
    <location>
        <begin position="7"/>
        <end position="42"/>
    </location>
</feature>
<feature type="domain" description="EF-hand 2" evidence="2">
    <location>
        <begin position="84"/>
        <end position="119"/>
    </location>
</feature>
<feature type="domain" description="EF-hand 3" evidence="5">
    <location>
        <begin position="119"/>
        <end position="151"/>
    </location>
</feature>
<feature type="modified residue" description="N-acetylcysteine" evidence="7 9 10 13">
    <location>
        <position position="2"/>
    </location>
</feature>
<feature type="modified residue" description="Phosphoserine" evidence="11 12">
    <location>
        <position position="57"/>
    </location>
</feature>
<feature type="modified residue" description="N6-acetyllysine" evidence="8">
    <location>
        <position position="81"/>
    </location>
</feature>
<feature type="splice variant" id="VSP_009735" description="In isoform Smooth muscle." evidence="3 4">
    <original>AFVRHILSG</original>
    <variation>ELVRMVLNG</variation>
    <location>
        <begin position="143"/>
        <end position="151"/>
    </location>
</feature>
<feature type="sequence variant" id="VAR_050457" description="In dbSNP:rs11553509.">
    <original>T</original>
    <variation>I</variation>
    <location>
        <position position="85"/>
    </location>
</feature>
<feature type="sequence variant" id="VAR_034118" description="In dbSNP:rs1050470.">
    <original>T</original>
    <variation>P</variation>
    <location>
        <position position="103"/>
    </location>
</feature>
<feature type="sequence conflict" description="In Ref. 3; AAA20643." evidence="5" ref="3">
    <original>A</original>
    <variation>ADLIPST</variation>
    <location>
        <position position="10"/>
    </location>
</feature>
<feature type="sequence conflict" description="In Ref. 2; AAA59853." evidence="5" ref="2">
    <original>N</original>
    <variation>D</variation>
    <location>
        <position position="45"/>
    </location>
</feature>
<feature type="sequence conflict" description="In Ref. 3; AAA20643." evidence="5" ref="3">
    <original>T</original>
    <variation>R</variation>
    <location>
        <position position="76"/>
    </location>
</feature>
<feature type="modified residue" description="Phosphoserine" evidence="6">
    <location sequence="P60660-2">
        <position position="135"/>
    </location>
</feature>
<protein>
    <recommendedName>
        <fullName>Myosin light polypeptide 6</fullName>
    </recommendedName>
    <alternativeName>
        <fullName>17 kDa myosin light chain</fullName>
        <shortName>LC17</shortName>
    </alternativeName>
    <alternativeName>
        <fullName>Myosin light chain 3</fullName>
        <shortName>MLC-3</shortName>
    </alternativeName>
    <alternativeName>
        <fullName>Myosin light chain alkali 3</fullName>
        <shortName>Myosin light chain A3</shortName>
    </alternativeName>
    <alternativeName>
        <fullName>Smooth muscle and nonmuscle myosin light chain alkali 6</fullName>
    </alternativeName>
</protein>
<sequence length="151" mass="16930">MCDFTEDQTAEFKEAFQLFDRTGDGKILYSQCGDVMRALGQNPTNAEVLKVLGNPKSDEMNVKVLDFEHFLPMLQTVAKNKDQGTYEDYVEGLRVFDKEGNGTVMGAEIRHVLVTLGEKMTEEEVEMLVAGHEDSNGCINYEAFVRHILSG</sequence>